<sequence length="711" mass="78530">MTLVMSPDSSYGRYDAPAPADNRIMSPVHKEREPELHIEFDGTTVLCRVCGDKASGFHYGVHSCEGCKGFFRRSIQQKIQYRPCTKNQQCSILRINRNRCQYCRLKKCIAVGMSRDAVRFGRVPKREKARILAAMQSSTTRAHEQAAAAELDDGPRLLARVVRAHLDTCEFTRDRVAAMRNGARDCPTYSQPTLACPLNPAPELQSEKEFSQRFAHVIRGVIDFAGLIPGFQLLTQDDKFTLLKSGLFDALFVRLICMFDAPLNSIICLNGQLMKRDSIQSGANARFLVDSTFKFAERMNSMNLTDAEIGLFCAIVLITPDRPGLRNVELVERMHSRLKSCLQTVIAQNRSDGPGFLRELMDTLPDLRTLSTLHTEKLVVFRTEHKELLRQQMWVEDEGALWADSGADDSARSPIGSVSSSESSETTGDCGTPLLAATLAGRRRLDSRGSVDEEALGVAHLAHNGLTVTPVRPPPRYRKLDSPTDSGIESGNEKHERIVGPESGCSSPRSSLEEHSDDRRPIAPADDMPVLKRVLQAPPLYDASSLMDEAYKPHKKFRAMRRDTWSEAEARPGRPTPSPQPPHHPHPASPAHPAHSPRPIRAPLSSTHSVLAKSLMEGPRMTPEQLKRTDIIQQYMRRGETGAPTEGCPLRAGGLLTCFRGASPAPQPVIALQVDVAETDAPQPLNLSKKSPSPSPPPPPPRSYMPPMLPA</sequence>
<organism>
    <name type="scientific">Galleria mellonella</name>
    <name type="common">Greater wax moth</name>
    <dbReference type="NCBI Taxonomy" id="7137"/>
    <lineage>
        <taxon>Eukaryota</taxon>
        <taxon>Metazoa</taxon>
        <taxon>Ecdysozoa</taxon>
        <taxon>Arthropoda</taxon>
        <taxon>Hexapoda</taxon>
        <taxon>Insecta</taxon>
        <taxon>Pterygota</taxon>
        <taxon>Neoptera</taxon>
        <taxon>Endopterygota</taxon>
        <taxon>Lepidoptera</taxon>
        <taxon>Glossata</taxon>
        <taxon>Ditrysia</taxon>
        <taxon>Pyraloidea</taxon>
        <taxon>Pyralidae</taxon>
        <taxon>Galleriinae</taxon>
        <taxon>Galleria</taxon>
    </lineage>
</organism>
<gene>
    <name type="primary">E75</name>
    <name type="synonym">NR1D3</name>
</gene>
<comment type="function">
    <text>Orphan receptor possibly involved in the regulation of genes in the ecdysteroid cascade.</text>
</comment>
<comment type="subcellular location">
    <subcellularLocation>
        <location evidence="1">Nucleus</location>
    </subcellularLocation>
</comment>
<comment type="alternative products">
    <event type="alternative splicing"/>
    <isoform>
        <id>P50239-1</id>
        <name>1</name>
        <name>E75A</name>
        <sequence type="displayed"/>
    </isoform>
    <isoform>
        <id>P50239-2</id>
        <name>2</name>
        <name>E75B</name>
        <sequence type="described" ref="VSP_003652"/>
    </isoform>
    <text>Additional isoforms seem to exist. Isoforms differ in their N-termini.</text>
</comment>
<comment type="developmental stage">
    <text>Both isoforms first expressed in stage-2 larvae and then highly expressed during larval and pupal molts. Only isoform E75A is expressed at the time of pupal ecdysis.</text>
</comment>
<comment type="induction">
    <text>Expression is induced by 20-OH-ecdysone which initiates and coordinates the molts.</text>
</comment>
<comment type="miscellaneous">
    <molecule>Isoform 2</molecule>
    <text evidence="5">Lacks the first zinc-finger.</text>
</comment>
<comment type="similarity">
    <text evidence="5">Belongs to the nuclear hormone receptor family. NR1 subfamily.</text>
</comment>
<name>E75_GALME</name>
<protein>
    <recommendedName>
        <fullName>Ecdysone-inducible protein E75</fullName>
    </recommendedName>
    <alternativeName>
        <fullName>Nuclear receptor subfamily 1 group D member 3</fullName>
    </alternativeName>
</protein>
<dbReference type="EMBL" id="U02620">
    <property type="protein sequence ID" value="AAA19579.1"/>
    <property type="molecule type" value="mRNA"/>
</dbReference>
<dbReference type="EMBL" id="U51008">
    <property type="protein sequence ID" value="AAA93484.1"/>
    <property type="molecule type" value="Genomic_DNA"/>
</dbReference>
<dbReference type="PIR" id="S43464">
    <property type="entry name" value="S43464"/>
</dbReference>
<dbReference type="SMR" id="P50239"/>
<dbReference type="FunCoup" id="P50239">
    <property type="interactions" value="213"/>
</dbReference>
<dbReference type="InParanoid" id="P50239"/>
<dbReference type="OrthoDB" id="7634782at2759"/>
<dbReference type="Proteomes" id="UP000504614">
    <property type="component" value="Unplaced"/>
</dbReference>
<dbReference type="GO" id="GO:0005634">
    <property type="term" value="C:nucleus"/>
    <property type="evidence" value="ECO:0007669"/>
    <property type="project" value="UniProtKB-SubCell"/>
</dbReference>
<dbReference type="GO" id="GO:0004879">
    <property type="term" value="F:nuclear receptor activity"/>
    <property type="evidence" value="ECO:0007669"/>
    <property type="project" value="InterPro"/>
</dbReference>
<dbReference type="GO" id="GO:0000978">
    <property type="term" value="F:RNA polymerase II cis-regulatory region sequence-specific DNA binding"/>
    <property type="evidence" value="ECO:0007669"/>
    <property type="project" value="TreeGrafter"/>
</dbReference>
<dbReference type="GO" id="GO:0008270">
    <property type="term" value="F:zinc ion binding"/>
    <property type="evidence" value="ECO:0007669"/>
    <property type="project" value="UniProtKB-KW"/>
</dbReference>
<dbReference type="GO" id="GO:0030154">
    <property type="term" value="P:cell differentiation"/>
    <property type="evidence" value="ECO:0007669"/>
    <property type="project" value="TreeGrafter"/>
</dbReference>
<dbReference type="GO" id="GO:0009755">
    <property type="term" value="P:hormone-mediated signaling pathway"/>
    <property type="evidence" value="ECO:0007669"/>
    <property type="project" value="TreeGrafter"/>
</dbReference>
<dbReference type="GO" id="GO:0000122">
    <property type="term" value="P:negative regulation of transcription by RNA polymerase II"/>
    <property type="evidence" value="ECO:0007669"/>
    <property type="project" value="TreeGrafter"/>
</dbReference>
<dbReference type="GO" id="GO:0045944">
    <property type="term" value="P:positive regulation of transcription by RNA polymerase II"/>
    <property type="evidence" value="ECO:0007669"/>
    <property type="project" value="TreeGrafter"/>
</dbReference>
<dbReference type="CDD" id="cd07166">
    <property type="entry name" value="NR_DBD_REV_ERB"/>
    <property type="match status" value="1"/>
</dbReference>
<dbReference type="FunFam" id="1.10.565.10:FF:000029">
    <property type="entry name" value="Ecdysone-induced protein 75B, isoform B"/>
    <property type="match status" value="1"/>
</dbReference>
<dbReference type="FunFam" id="3.30.50.10:FF:000013">
    <property type="entry name" value="Nuclear receptor subfamily 1 group D member 2"/>
    <property type="match status" value="1"/>
</dbReference>
<dbReference type="Gene3D" id="3.30.50.10">
    <property type="entry name" value="Erythroid Transcription Factor GATA-1, subunit A"/>
    <property type="match status" value="1"/>
</dbReference>
<dbReference type="Gene3D" id="1.10.565.10">
    <property type="entry name" value="Retinoid X Receptor"/>
    <property type="match status" value="1"/>
</dbReference>
<dbReference type="InterPro" id="IPR035500">
    <property type="entry name" value="NHR-like_dom_sf"/>
</dbReference>
<dbReference type="InterPro" id="IPR000536">
    <property type="entry name" value="Nucl_hrmn_rcpt_lig-bd"/>
</dbReference>
<dbReference type="InterPro" id="IPR050234">
    <property type="entry name" value="Nuclear_hormone_rcpt_NR1"/>
</dbReference>
<dbReference type="InterPro" id="IPR001723">
    <property type="entry name" value="Nuclear_hrmn_rcpt"/>
</dbReference>
<dbReference type="InterPro" id="IPR001728">
    <property type="entry name" value="ThyrH_rcpt"/>
</dbReference>
<dbReference type="InterPro" id="IPR001628">
    <property type="entry name" value="Znf_hrmn_rcpt"/>
</dbReference>
<dbReference type="InterPro" id="IPR013088">
    <property type="entry name" value="Znf_NHR/GATA"/>
</dbReference>
<dbReference type="PANTHER" id="PTHR24082:SF473">
    <property type="entry name" value="ECDYSONE-INDUCED PROTEIN 75B, ISOFORM B"/>
    <property type="match status" value="1"/>
</dbReference>
<dbReference type="PANTHER" id="PTHR24082">
    <property type="entry name" value="NUCLEAR HORMONE RECEPTOR"/>
    <property type="match status" value="1"/>
</dbReference>
<dbReference type="Pfam" id="PF00104">
    <property type="entry name" value="Hormone_recep"/>
    <property type="match status" value="1"/>
</dbReference>
<dbReference type="Pfam" id="PF00105">
    <property type="entry name" value="zf-C4"/>
    <property type="match status" value="1"/>
</dbReference>
<dbReference type="PRINTS" id="PR00398">
    <property type="entry name" value="STRDHORMONER"/>
</dbReference>
<dbReference type="PRINTS" id="PR00047">
    <property type="entry name" value="STROIDFINGER"/>
</dbReference>
<dbReference type="PRINTS" id="PR00546">
    <property type="entry name" value="THYROIDHORMR"/>
</dbReference>
<dbReference type="SMART" id="SM00430">
    <property type="entry name" value="HOLI"/>
    <property type="match status" value="1"/>
</dbReference>
<dbReference type="SMART" id="SM00399">
    <property type="entry name" value="ZnF_C4"/>
    <property type="match status" value="1"/>
</dbReference>
<dbReference type="SUPFAM" id="SSF57716">
    <property type="entry name" value="Glucocorticoid receptor-like (DNA-binding domain)"/>
    <property type="match status" value="1"/>
</dbReference>
<dbReference type="SUPFAM" id="SSF48508">
    <property type="entry name" value="Nuclear receptor ligand-binding domain"/>
    <property type="match status" value="1"/>
</dbReference>
<dbReference type="PROSITE" id="PS51843">
    <property type="entry name" value="NR_LBD"/>
    <property type="match status" value="1"/>
</dbReference>
<dbReference type="PROSITE" id="PS00031">
    <property type="entry name" value="NUCLEAR_REC_DBD_1"/>
    <property type="match status" value="1"/>
</dbReference>
<dbReference type="PROSITE" id="PS51030">
    <property type="entry name" value="NUCLEAR_REC_DBD_2"/>
    <property type="match status" value="1"/>
</dbReference>
<reference key="1">
    <citation type="journal article" date="1994" name="Eur. J. Biochem.">
        <title>Isolation, characterization and developmental expression of the ecdysteroid-induced E75 gene of the wax moth Galleria mellonella.</title>
        <authorList>
            <person name="Jindra M."/>
            <person name="Sehnal F."/>
            <person name="Riddiford L.M."/>
        </authorList>
    </citation>
    <scope>NUCLEOTIDE SEQUENCE [MRNA] (ISOFORMS 1 AND 2)</scope>
</reference>
<keyword id="KW-0025">Alternative splicing</keyword>
<keyword id="KW-0238">DNA-binding</keyword>
<keyword id="KW-0479">Metal-binding</keyword>
<keyword id="KW-0539">Nucleus</keyword>
<keyword id="KW-0675">Receptor</keyword>
<keyword id="KW-1185">Reference proteome</keyword>
<keyword id="KW-0804">Transcription</keyword>
<keyword id="KW-0805">Transcription regulation</keyword>
<keyword id="KW-0862">Zinc</keyword>
<keyword id="KW-0863">Zinc-finger</keyword>
<feature type="chain" id="PRO_0000053508" description="Ecdysone-inducible protein E75">
    <location>
        <begin position="1"/>
        <end position="711"/>
    </location>
</feature>
<feature type="domain" description="NR LBD" evidence="2">
    <location>
        <begin position="153"/>
        <end position="400"/>
    </location>
</feature>
<feature type="DNA-binding region" description="Nuclear receptor" evidence="1">
    <location>
        <begin position="44"/>
        <end position="120"/>
    </location>
</feature>
<feature type="zinc finger region" description="NR C4-type" evidence="1">
    <location>
        <begin position="47"/>
        <end position="67"/>
    </location>
</feature>
<feature type="zinc finger region" description="NR C4-type" evidence="1">
    <location>
        <begin position="84"/>
        <end position="108"/>
    </location>
</feature>
<feature type="region of interest" description="Disordered" evidence="3">
    <location>
        <begin position="405"/>
        <end position="432"/>
    </location>
</feature>
<feature type="region of interest" description="Disordered" evidence="3">
    <location>
        <begin position="466"/>
        <end position="530"/>
    </location>
</feature>
<feature type="region of interest" description="Disordered" evidence="3">
    <location>
        <begin position="559"/>
        <end position="602"/>
    </location>
</feature>
<feature type="region of interest" description="Disordered" evidence="3">
    <location>
        <begin position="680"/>
        <end position="711"/>
    </location>
</feature>
<feature type="compositionally biased region" description="Basic and acidic residues" evidence="3">
    <location>
        <begin position="511"/>
        <end position="521"/>
    </location>
</feature>
<feature type="compositionally biased region" description="Basic and acidic residues" evidence="3">
    <location>
        <begin position="560"/>
        <end position="572"/>
    </location>
</feature>
<feature type="compositionally biased region" description="Pro residues" evidence="3">
    <location>
        <begin position="574"/>
        <end position="590"/>
    </location>
</feature>
<feature type="compositionally biased region" description="Low complexity" evidence="3">
    <location>
        <begin position="591"/>
        <end position="602"/>
    </location>
</feature>
<feature type="compositionally biased region" description="Low complexity" evidence="3">
    <location>
        <begin position="682"/>
        <end position="692"/>
    </location>
</feature>
<feature type="compositionally biased region" description="Pro residues" evidence="3">
    <location>
        <begin position="693"/>
        <end position="711"/>
    </location>
</feature>
<feature type="splice variant" id="VSP_003652" description="In isoform 2." evidence="4">
    <original>MTLVMSPDSSYGRYDAPAPADNRIMSPVHKEREPELHIEFDGTTVLCRVCGDKASGFHYGVHSCEGCK</original>
    <variation>MVRAMSCGAELRERHSVLVSMLESRRESSDSGCSSDESSDLERNSNCRCDSQ</variation>
    <location>
        <begin position="1"/>
        <end position="68"/>
    </location>
</feature>
<proteinExistence type="evidence at transcript level"/>
<accession>P50239</accession>
<accession>Q24994</accession>
<evidence type="ECO:0000255" key="1">
    <source>
        <dbReference type="PROSITE-ProRule" id="PRU00407"/>
    </source>
</evidence>
<evidence type="ECO:0000255" key="2">
    <source>
        <dbReference type="PROSITE-ProRule" id="PRU01189"/>
    </source>
</evidence>
<evidence type="ECO:0000256" key="3">
    <source>
        <dbReference type="SAM" id="MobiDB-lite"/>
    </source>
</evidence>
<evidence type="ECO:0000303" key="4">
    <source>
    </source>
</evidence>
<evidence type="ECO:0000305" key="5"/>